<organism>
    <name type="scientific">Candida glabrata (strain ATCC 2001 / BCRC 20586 / JCM 3761 / NBRC 0622 / NRRL Y-65 / CBS 138)</name>
    <name type="common">Yeast</name>
    <name type="synonym">Nakaseomyces glabratus</name>
    <dbReference type="NCBI Taxonomy" id="284593"/>
    <lineage>
        <taxon>Eukaryota</taxon>
        <taxon>Fungi</taxon>
        <taxon>Dikarya</taxon>
        <taxon>Ascomycota</taxon>
        <taxon>Saccharomycotina</taxon>
        <taxon>Saccharomycetes</taxon>
        <taxon>Saccharomycetales</taxon>
        <taxon>Saccharomycetaceae</taxon>
        <taxon>Nakaseomyces</taxon>
    </lineage>
</organism>
<evidence type="ECO:0000250" key="1">
    <source>
        <dbReference type="UniProtKB" id="P41814"/>
    </source>
</evidence>
<evidence type="ECO:0000256" key="2">
    <source>
        <dbReference type="SAM" id="MobiDB-lite"/>
    </source>
</evidence>
<evidence type="ECO:0000305" key="3"/>
<keyword id="KW-0539">Nucleus</keyword>
<keyword id="KW-1185">Reference proteome</keyword>
<keyword id="KW-0694">RNA-binding</keyword>
<keyword id="KW-0819">tRNA processing</keyword>
<feature type="chain" id="PRO_0000256161" description="tRNA (adenine(58)-N(1))-methyltransferase non-catalytic subunit TRM6">
    <location>
        <begin position="1"/>
        <end position="473"/>
    </location>
</feature>
<feature type="region of interest" description="Disordered" evidence="2">
    <location>
        <begin position="452"/>
        <end position="473"/>
    </location>
</feature>
<feature type="compositionally biased region" description="Acidic residues" evidence="2">
    <location>
        <begin position="452"/>
        <end position="465"/>
    </location>
</feature>
<name>TRM6_CANGA</name>
<dbReference type="EMBL" id="CR380956">
    <property type="protein sequence ID" value="CAG61096.1"/>
    <property type="molecule type" value="Genomic_DNA"/>
</dbReference>
<dbReference type="RefSeq" id="XP_448145.1">
    <property type="nucleotide sequence ID" value="XM_448145.1"/>
</dbReference>
<dbReference type="SMR" id="Q6FNP9"/>
<dbReference type="FunCoup" id="Q6FNP9">
    <property type="interactions" value="1003"/>
</dbReference>
<dbReference type="STRING" id="284593.Q6FNP9"/>
<dbReference type="EnsemblFungi" id="CAGL0J10010g-T">
    <property type="protein sequence ID" value="CAGL0J10010g-T-p1"/>
    <property type="gene ID" value="CAGL0J10010g"/>
</dbReference>
<dbReference type="KEGG" id="cgr:2889430"/>
<dbReference type="CGD" id="CAL0133494">
    <property type="gene designation" value="CAGL0J10010g"/>
</dbReference>
<dbReference type="VEuPathDB" id="FungiDB:CAGL0J10010g"/>
<dbReference type="eggNOG" id="KOG1416">
    <property type="taxonomic scope" value="Eukaryota"/>
</dbReference>
<dbReference type="HOGENOM" id="CLU_010916_1_1_1"/>
<dbReference type="InParanoid" id="Q6FNP9"/>
<dbReference type="OMA" id="TRCRPYQ"/>
<dbReference type="Proteomes" id="UP000002428">
    <property type="component" value="Chromosome J"/>
</dbReference>
<dbReference type="GO" id="GO:0005634">
    <property type="term" value="C:nucleus"/>
    <property type="evidence" value="ECO:0007669"/>
    <property type="project" value="UniProtKB-SubCell"/>
</dbReference>
<dbReference type="GO" id="GO:0031515">
    <property type="term" value="C:tRNA (m1A) methyltransferase complex"/>
    <property type="evidence" value="ECO:0007669"/>
    <property type="project" value="EnsemblFungi"/>
</dbReference>
<dbReference type="GO" id="GO:0003723">
    <property type="term" value="F:RNA binding"/>
    <property type="evidence" value="ECO:0007669"/>
    <property type="project" value="UniProtKB-KW"/>
</dbReference>
<dbReference type="GO" id="GO:0160107">
    <property type="term" value="F:tRNA (adenine(58)-N1)-methyltransferase activity"/>
    <property type="evidence" value="ECO:0007669"/>
    <property type="project" value="EnsemblFungi"/>
</dbReference>
<dbReference type="GO" id="GO:0030488">
    <property type="term" value="P:tRNA methylation"/>
    <property type="evidence" value="ECO:0007669"/>
    <property type="project" value="EnsemblFungi"/>
</dbReference>
<dbReference type="InterPro" id="IPR017423">
    <property type="entry name" value="TRM6"/>
</dbReference>
<dbReference type="PANTHER" id="PTHR12945">
    <property type="entry name" value="TRANSLATION INITIATION FACTOR EIF3-RELATED"/>
    <property type="match status" value="1"/>
</dbReference>
<dbReference type="PANTHER" id="PTHR12945:SF0">
    <property type="entry name" value="TRNA (ADENINE(58)-N(1))-METHYLTRANSFERASE NON-CATALYTIC SUBUNIT TRM6"/>
    <property type="match status" value="1"/>
</dbReference>
<dbReference type="Pfam" id="PF04189">
    <property type="entry name" value="Gcd10p"/>
    <property type="match status" value="1"/>
</dbReference>
<dbReference type="PIRSF" id="PIRSF038170">
    <property type="entry name" value="tRNA_m1A_mtfrase"/>
    <property type="match status" value="1"/>
</dbReference>
<sequence length="473" mass="53962">MDPLKSIVQDQHVILTLPSGNSKIVELKPDSSVSLGKFGAFQVNDILGWPLGTTFEIYYDNVEEIVENKKKKPKSNELNKVPVGKVRLYKEVATDDKAEEEVEEMDSSAVIPVELQNVLSSATNQGLINIGNDVQKLTMHDVERFKQQSASANEIITKMIESHGSFHQKTIYSQEKYLKRKKQKFAKFFTVDYLSSSMLLKFLVEKGDIQRVLDLSEESLGMILNLTNIRSDGTYLCMDETGGLIVYTMLERMFGGKEDLDAPGKIVVINENEHPNLDLLKFSNYSEKFIEKHVVTLSILDYFRPPTMEEVEGRFTPLSKEEVNKLKSGKRSAYSRKLKWYYTQLRVIEMATKQQYDGLVVASTLHLPSLVPRLAERVHGARPIVCFSQFKETLLELAHTLYSDLRYLAPTILETRCRPYQTARGKLHPLMTMRGGGGYLLWCHRVIPAPEPEIEEPTDVNADEQEEKKQKME</sequence>
<proteinExistence type="inferred from homology"/>
<protein>
    <recommendedName>
        <fullName>tRNA (adenine(58)-N(1))-methyltransferase non-catalytic subunit TRM6</fullName>
    </recommendedName>
    <alternativeName>
        <fullName>tRNA(m1A58)-methyltransferase subunit TRM6</fullName>
        <shortName>tRNA(m1A58)MTase subunit TRM6</shortName>
    </alternativeName>
</protein>
<reference key="1">
    <citation type="journal article" date="2004" name="Nature">
        <title>Genome evolution in yeasts.</title>
        <authorList>
            <person name="Dujon B."/>
            <person name="Sherman D."/>
            <person name="Fischer G."/>
            <person name="Durrens P."/>
            <person name="Casaregola S."/>
            <person name="Lafontaine I."/>
            <person name="de Montigny J."/>
            <person name="Marck C."/>
            <person name="Neuveglise C."/>
            <person name="Talla E."/>
            <person name="Goffard N."/>
            <person name="Frangeul L."/>
            <person name="Aigle M."/>
            <person name="Anthouard V."/>
            <person name="Babour A."/>
            <person name="Barbe V."/>
            <person name="Barnay S."/>
            <person name="Blanchin S."/>
            <person name="Beckerich J.-M."/>
            <person name="Beyne E."/>
            <person name="Bleykasten C."/>
            <person name="Boisrame A."/>
            <person name="Boyer J."/>
            <person name="Cattolico L."/>
            <person name="Confanioleri F."/>
            <person name="de Daruvar A."/>
            <person name="Despons L."/>
            <person name="Fabre E."/>
            <person name="Fairhead C."/>
            <person name="Ferry-Dumazet H."/>
            <person name="Groppi A."/>
            <person name="Hantraye F."/>
            <person name="Hennequin C."/>
            <person name="Jauniaux N."/>
            <person name="Joyet P."/>
            <person name="Kachouri R."/>
            <person name="Kerrest A."/>
            <person name="Koszul R."/>
            <person name="Lemaire M."/>
            <person name="Lesur I."/>
            <person name="Ma L."/>
            <person name="Muller H."/>
            <person name="Nicaud J.-M."/>
            <person name="Nikolski M."/>
            <person name="Oztas S."/>
            <person name="Ozier-Kalogeropoulos O."/>
            <person name="Pellenz S."/>
            <person name="Potier S."/>
            <person name="Richard G.-F."/>
            <person name="Straub M.-L."/>
            <person name="Suleau A."/>
            <person name="Swennen D."/>
            <person name="Tekaia F."/>
            <person name="Wesolowski-Louvel M."/>
            <person name="Westhof E."/>
            <person name="Wirth B."/>
            <person name="Zeniou-Meyer M."/>
            <person name="Zivanovic Y."/>
            <person name="Bolotin-Fukuhara M."/>
            <person name="Thierry A."/>
            <person name="Bouchier C."/>
            <person name="Caudron B."/>
            <person name="Scarpelli C."/>
            <person name="Gaillardin C."/>
            <person name="Weissenbach J."/>
            <person name="Wincker P."/>
            <person name="Souciet J.-L."/>
        </authorList>
    </citation>
    <scope>NUCLEOTIDE SEQUENCE [LARGE SCALE GENOMIC DNA]</scope>
    <source>
        <strain>ATCC 2001 / BCRC 20586 / JCM 3761 / NBRC 0622 / NRRL Y-65 / CBS 138</strain>
    </source>
</reference>
<comment type="function">
    <text evidence="1">Substrate-binding subunit of tRNA (adenine-N(1)-)-methyltransferase, which catalyzes the formation of N(1)-methyladenine at position 58 (m1A58) in initiator methionyl-tRNA.</text>
</comment>
<comment type="subunit">
    <text evidence="1">Heterotetramer; composed of two copies of TRM6 and two copies of TRM61.</text>
</comment>
<comment type="subcellular location">
    <subcellularLocation>
        <location evidence="1">Nucleus</location>
    </subcellularLocation>
</comment>
<comment type="similarity">
    <text evidence="3">Belongs to the TRM6/GCD10 family.</text>
</comment>
<gene>
    <name type="primary">TRM6</name>
    <name type="ordered locus">CAGL0J10010g</name>
</gene>
<accession>Q6FNP9</accession>